<gene>
    <name evidence="1" type="primary">ldh</name>
    <name evidence="6" type="synonym">lctE</name>
    <name type="ordered locus">BSU03050</name>
</gene>
<accession>P13714</accession>
<dbReference type="EC" id="1.1.1.27" evidence="1"/>
<dbReference type="EMBL" id="D50453">
    <property type="protein sequence ID" value="BAA08939.1"/>
    <property type="status" value="ALT_INIT"/>
    <property type="molecule type" value="Genomic_DNA"/>
</dbReference>
<dbReference type="EMBL" id="AL009126">
    <property type="protein sequence ID" value="CAB12099.2"/>
    <property type="status" value="ALT_INIT"/>
    <property type="molecule type" value="Genomic_DNA"/>
</dbReference>
<dbReference type="PIR" id="E69649">
    <property type="entry name" value="E69649"/>
</dbReference>
<dbReference type="RefSeq" id="NP_388187.2">
    <property type="nucleotide sequence ID" value="NC_000964.3"/>
</dbReference>
<dbReference type="PDB" id="3PQD">
    <property type="method" value="X-ray"/>
    <property type="resolution" value="2.38 A"/>
    <property type="chains" value="A/B/C/D/E/F/G/H=1-320"/>
</dbReference>
<dbReference type="PDB" id="3PQE">
    <property type="method" value="X-ray"/>
    <property type="resolution" value="2.20 A"/>
    <property type="chains" value="A/B/C/D=1-320"/>
</dbReference>
<dbReference type="PDB" id="3PQF">
    <property type="method" value="X-ray"/>
    <property type="resolution" value="2.49 A"/>
    <property type="chains" value="A/B/C/D=1-320"/>
</dbReference>
<dbReference type="PDBsum" id="3PQD"/>
<dbReference type="PDBsum" id="3PQE"/>
<dbReference type="PDBsum" id="3PQF"/>
<dbReference type="SMR" id="P13714"/>
<dbReference type="FunCoup" id="P13714">
    <property type="interactions" value="343"/>
</dbReference>
<dbReference type="STRING" id="224308.BSU03050"/>
<dbReference type="iPTMnet" id="P13714"/>
<dbReference type="jPOST" id="P13714"/>
<dbReference type="PaxDb" id="224308-BSU03050"/>
<dbReference type="EnsemblBacteria" id="CAB12099">
    <property type="protein sequence ID" value="CAB12099"/>
    <property type="gene ID" value="BSU_03050"/>
</dbReference>
<dbReference type="GeneID" id="938348"/>
<dbReference type="KEGG" id="bsu:BSU03050"/>
<dbReference type="PATRIC" id="fig|224308.43.peg.313"/>
<dbReference type="eggNOG" id="COG0039">
    <property type="taxonomic scope" value="Bacteria"/>
</dbReference>
<dbReference type="InParanoid" id="P13714"/>
<dbReference type="OrthoDB" id="9802969at2"/>
<dbReference type="BioCyc" id="BSUB:BSU03050-MONOMER"/>
<dbReference type="SABIO-RK" id="P13714"/>
<dbReference type="UniPathway" id="UPA00554">
    <property type="reaction ID" value="UER00611"/>
</dbReference>
<dbReference type="EvolutionaryTrace" id="P13714"/>
<dbReference type="Proteomes" id="UP000001570">
    <property type="component" value="Chromosome"/>
</dbReference>
<dbReference type="GO" id="GO:0005737">
    <property type="term" value="C:cytoplasm"/>
    <property type="evidence" value="ECO:0007669"/>
    <property type="project" value="UniProtKB-SubCell"/>
</dbReference>
<dbReference type="GO" id="GO:0004459">
    <property type="term" value="F:L-lactate dehydrogenase activity"/>
    <property type="evidence" value="ECO:0000318"/>
    <property type="project" value="GO_Central"/>
</dbReference>
<dbReference type="GO" id="GO:0006096">
    <property type="term" value="P:glycolytic process"/>
    <property type="evidence" value="ECO:0007669"/>
    <property type="project" value="UniProtKB-UniRule"/>
</dbReference>
<dbReference type="GO" id="GO:0006089">
    <property type="term" value="P:lactate metabolic process"/>
    <property type="evidence" value="ECO:0000318"/>
    <property type="project" value="GO_Central"/>
</dbReference>
<dbReference type="GO" id="GO:0006090">
    <property type="term" value="P:pyruvate metabolic process"/>
    <property type="evidence" value="ECO:0000318"/>
    <property type="project" value="GO_Central"/>
</dbReference>
<dbReference type="CDD" id="cd05291">
    <property type="entry name" value="HicDH_like"/>
    <property type="match status" value="1"/>
</dbReference>
<dbReference type="FunFam" id="3.40.50.720:FF:000018">
    <property type="entry name" value="Malate dehydrogenase"/>
    <property type="match status" value="1"/>
</dbReference>
<dbReference type="Gene3D" id="3.90.110.10">
    <property type="entry name" value="Lactate dehydrogenase/glycoside hydrolase, family 4, C-terminal"/>
    <property type="match status" value="1"/>
</dbReference>
<dbReference type="Gene3D" id="3.40.50.720">
    <property type="entry name" value="NAD(P)-binding Rossmann-like Domain"/>
    <property type="match status" value="1"/>
</dbReference>
<dbReference type="HAMAP" id="MF_00488">
    <property type="entry name" value="Lactate_dehydrog"/>
    <property type="match status" value="1"/>
</dbReference>
<dbReference type="InterPro" id="IPR001557">
    <property type="entry name" value="L-lactate/malate_DH"/>
</dbReference>
<dbReference type="InterPro" id="IPR011304">
    <property type="entry name" value="L-lactate_DH"/>
</dbReference>
<dbReference type="InterPro" id="IPR018177">
    <property type="entry name" value="L-lactate_DH_AS"/>
</dbReference>
<dbReference type="InterPro" id="IPR022383">
    <property type="entry name" value="Lactate/malate_DH_C"/>
</dbReference>
<dbReference type="InterPro" id="IPR001236">
    <property type="entry name" value="Lactate/malate_DH_N"/>
</dbReference>
<dbReference type="InterPro" id="IPR015955">
    <property type="entry name" value="Lactate_DH/Glyco_Ohase_4_C"/>
</dbReference>
<dbReference type="InterPro" id="IPR036291">
    <property type="entry name" value="NAD(P)-bd_dom_sf"/>
</dbReference>
<dbReference type="NCBIfam" id="TIGR01771">
    <property type="entry name" value="L-LDH-NAD"/>
    <property type="match status" value="1"/>
</dbReference>
<dbReference type="NCBIfam" id="NF000824">
    <property type="entry name" value="PRK00066.1"/>
    <property type="match status" value="1"/>
</dbReference>
<dbReference type="NCBIfam" id="NF004863">
    <property type="entry name" value="PRK06223.1"/>
    <property type="match status" value="1"/>
</dbReference>
<dbReference type="PANTHER" id="PTHR43128">
    <property type="entry name" value="L-2-HYDROXYCARBOXYLATE DEHYDROGENASE (NAD(P)(+))"/>
    <property type="match status" value="1"/>
</dbReference>
<dbReference type="PANTHER" id="PTHR43128:SF16">
    <property type="entry name" value="L-LACTATE DEHYDROGENASE"/>
    <property type="match status" value="1"/>
</dbReference>
<dbReference type="Pfam" id="PF02866">
    <property type="entry name" value="Ldh_1_C"/>
    <property type="match status" value="1"/>
</dbReference>
<dbReference type="Pfam" id="PF00056">
    <property type="entry name" value="Ldh_1_N"/>
    <property type="match status" value="1"/>
</dbReference>
<dbReference type="PIRSF" id="PIRSF000102">
    <property type="entry name" value="Lac_mal_DH"/>
    <property type="match status" value="1"/>
</dbReference>
<dbReference type="PRINTS" id="PR00086">
    <property type="entry name" value="LLDHDRGNASE"/>
</dbReference>
<dbReference type="SUPFAM" id="SSF56327">
    <property type="entry name" value="LDH C-terminal domain-like"/>
    <property type="match status" value="1"/>
</dbReference>
<dbReference type="SUPFAM" id="SSF51735">
    <property type="entry name" value="NAD(P)-binding Rossmann-fold domains"/>
    <property type="match status" value="1"/>
</dbReference>
<dbReference type="PROSITE" id="PS00064">
    <property type="entry name" value="L_LDH"/>
    <property type="match status" value="1"/>
</dbReference>
<reference key="1">
    <citation type="journal article" date="1996" name="Microbiology">
        <title>The 25 degrees-36 degrees region of the Bacillus subtilis chromosome: determination of the sequence of a 146 kb segment and identification of 113 genes.</title>
        <authorList>
            <person name="Yamane K."/>
            <person name="Kumano M."/>
            <person name="Kurita K."/>
        </authorList>
    </citation>
    <scope>NUCLEOTIDE SEQUENCE [GENOMIC DNA]</scope>
    <source>
        <strain>168</strain>
    </source>
</reference>
<reference key="2">
    <citation type="journal article" date="1997" name="Nature">
        <title>The complete genome sequence of the Gram-positive bacterium Bacillus subtilis.</title>
        <authorList>
            <person name="Kunst F."/>
            <person name="Ogasawara N."/>
            <person name="Moszer I."/>
            <person name="Albertini A.M."/>
            <person name="Alloni G."/>
            <person name="Azevedo V."/>
            <person name="Bertero M.G."/>
            <person name="Bessieres P."/>
            <person name="Bolotin A."/>
            <person name="Borchert S."/>
            <person name="Borriss R."/>
            <person name="Boursier L."/>
            <person name="Brans A."/>
            <person name="Braun M."/>
            <person name="Brignell S.C."/>
            <person name="Bron S."/>
            <person name="Brouillet S."/>
            <person name="Bruschi C.V."/>
            <person name="Caldwell B."/>
            <person name="Capuano V."/>
            <person name="Carter N.M."/>
            <person name="Choi S.-K."/>
            <person name="Codani J.-J."/>
            <person name="Connerton I.F."/>
            <person name="Cummings N.J."/>
            <person name="Daniel R.A."/>
            <person name="Denizot F."/>
            <person name="Devine K.M."/>
            <person name="Duesterhoeft A."/>
            <person name="Ehrlich S.D."/>
            <person name="Emmerson P.T."/>
            <person name="Entian K.-D."/>
            <person name="Errington J."/>
            <person name="Fabret C."/>
            <person name="Ferrari E."/>
            <person name="Foulger D."/>
            <person name="Fritz C."/>
            <person name="Fujita M."/>
            <person name="Fujita Y."/>
            <person name="Fuma S."/>
            <person name="Galizzi A."/>
            <person name="Galleron N."/>
            <person name="Ghim S.-Y."/>
            <person name="Glaser P."/>
            <person name="Goffeau A."/>
            <person name="Golightly E.J."/>
            <person name="Grandi G."/>
            <person name="Guiseppi G."/>
            <person name="Guy B.J."/>
            <person name="Haga K."/>
            <person name="Haiech J."/>
            <person name="Harwood C.R."/>
            <person name="Henaut A."/>
            <person name="Hilbert H."/>
            <person name="Holsappel S."/>
            <person name="Hosono S."/>
            <person name="Hullo M.-F."/>
            <person name="Itaya M."/>
            <person name="Jones L.-M."/>
            <person name="Joris B."/>
            <person name="Karamata D."/>
            <person name="Kasahara Y."/>
            <person name="Klaerr-Blanchard M."/>
            <person name="Klein C."/>
            <person name="Kobayashi Y."/>
            <person name="Koetter P."/>
            <person name="Koningstein G."/>
            <person name="Krogh S."/>
            <person name="Kumano M."/>
            <person name="Kurita K."/>
            <person name="Lapidus A."/>
            <person name="Lardinois S."/>
            <person name="Lauber J."/>
            <person name="Lazarevic V."/>
            <person name="Lee S.-M."/>
            <person name="Levine A."/>
            <person name="Liu H."/>
            <person name="Masuda S."/>
            <person name="Mauel C."/>
            <person name="Medigue C."/>
            <person name="Medina N."/>
            <person name="Mellado R.P."/>
            <person name="Mizuno M."/>
            <person name="Moestl D."/>
            <person name="Nakai S."/>
            <person name="Noback M."/>
            <person name="Noone D."/>
            <person name="O'Reilly M."/>
            <person name="Ogawa K."/>
            <person name="Ogiwara A."/>
            <person name="Oudega B."/>
            <person name="Park S.-H."/>
            <person name="Parro V."/>
            <person name="Pohl T.M."/>
            <person name="Portetelle D."/>
            <person name="Porwollik S."/>
            <person name="Prescott A.M."/>
            <person name="Presecan E."/>
            <person name="Pujic P."/>
            <person name="Purnelle B."/>
            <person name="Rapoport G."/>
            <person name="Rey M."/>
            <person name="Reynolds S."/>
            <person name="Rieger M."/>
            <person name="Rivolta C."/>
            <person name="Rocha E."/>
            <person name="Roche B."/>
            <person name="Rose M."/>
            <person name="Sadaie Y."/>
            <person name="Sato T."/>
            <person name="Scanlan E."/>
            <person name="Schleich S."/>
            <person name="Schroeter R."/>
            <person name="Scoffone F."/>
            <person name="Sekiguchi J."/>
            <person name="Sekowska A."/>
            <person name="Seror S.J."/>
            <person name="Serror P."/>
            <person name="Shin B.-S."/>
            <person name="Soldo B."/>
            <person name="Sorokin A."/>
            <person name="Tacconi E."/>
            <person name="Takagi T."/>
            <person name="Takahashi H."/>
            <person name="Takemaru K."/>
            <person name="Takeuchi M."/>
            <person name="Tamakoshi A."/>
            <person name="Tanaka T."/>
            <person name="Terpstra P."/>
            <person name="Tognoni A."/>
            <person name="Tosato V."/>
            <person name="Uchiyama S."/>
            <person name="Vandenbol M."/>
            <person name="Vannier F."/>
            <person name="Vassarotti A."/>
            <person name="Viari A."/>
            <person name="Wambutt R."/>
            <person name="Wedler E."/>
            <person name="Wedler H."/>
            <person name="Weitzenegger T."/>
            <person name="Winters P."/>
            <person name="Wipat A."/>
            <person name="Yamamoto H."/>
            <person name="Yamane K."/>
            <person name="Yasumoto K."/>
            <person name="Yata K."/>
            <person name="Yoshida K."/>
            <person name="Yoshikawa H.-F."/>
            <person name="Zumstein E."/>
            <person name="Yoshikawa H."/>
            <person name="Danchin A."/>
        </authorList>
    </citation>
    <scope>NUCLEOTIDE SEQUENCE [LARGE SCALE GENOMIC DNA]</scope>
    <source>
        <strain>168</strain>
    </source>
</reference>
<reference key="3">
    <citation type="journal article" date="2009" name="Microbiology">
        <title>From a consortium sequence to a unified sequence: the Bacillus subtilis 168 reference genome a decade later.</title>
        <authorList>
            <person name="Barbe V."/>
            <person name="Cruveiller S."/>
            <person name="Kunst F."/>
            <person name="Lenoble P."/>
            <person name="Meurice G."/>
            <person name="Sekowska A."/>
            <person name="Vallenet D."/>
            <person name="Wang T."/>
            <person name="Moszer I."/>
            <person name="Medigue C."/>
            <person name="Danchin A."/>
        </authorList>
    </citation>
    <scope>SEQUENCE REVISION TO 51 AND 57-58</scope>
</reference>
<reference key="4">
    <citation type="journal article" date="1986" name="Biol. Chem. Hoppe-Seyler">
        <title>Structure and function of L-lactate dehydrogenases from thermophilic and mesophilic bacteria, IV. The primary structure of the mesophilic lactate dehydrogenase from Bacillus subtilis.</title>
        <authorList>
            <person name="Hediger M.A."/>
            <person name="Frank G."/>
            <person name="Zuber H."/>
        </authorList>
    </citation>
    <scope>PARTIAL PROTEIN SEQUENCE</scope>
</reference>
<reference key="5">
    <citation type="journal article" date="2000" name="J. Bacteriol.">
        <title>Fermentative metabolism of Bacillus subtilis: physiology and regulation of gene expression.</title>
        <authorList>
            <person name="Cruz Ramos H."/>
            <person name="Hoffmann T."/>
            <person name="Marino M."/>
            <person name="Nedjari H."/>
            <person name="Presecan-Siedel E."/>
            <person name="Dreesen O."/>
            <person name="Glaser P."/>
            <person name="Jahn D."/>
        </authorList>
    </citation>
    <scope>INDUCTION</scope>
    <scope>PATHWAY</scope>
</reference>
<reference key="6">
    <citation type="journal article" date="2007" name="Mol. Cell. Proteomics">
        <title>The serine/threonine/tyrosine phosphoproteome of the model bacterium Bacillus subtilis.</title>
        <authorList>
            <person name="Macek B."/>
            <person name="Mijakovic I."/>
            <person name="Olsen J.V."/>
            <person name="Gnad F."/>
            <person name="Kumar C."/>
            <person name="Jensen P.R."/>
            <person name="Mann M."/>
        </authorList>
    </citation>
    <scope>PHOSPHORYLATION [LARGE SCALE ANALYSIS] AT TYR-223</scope>
    <scope>IDENTIFICATION BY MASS SPECTROMETRY</scope>
    <source>
        <strain>168</strain>
    </source>
</reference>
<reference key="7">
    <citation type="submission" date="2010-11" db="PDB data bank">
        <title>Crystal structure of L-lactate dehydrogenase from Bacillus subtilis mutation H171C complexed with NAD+.</title>
        <authorList>
            <person name="Zhang Y."/>
            <person name="Garavito R.M."/>
        </authorList>
    </citation>
    <scope>X-RAY CRYSTALLOGRAPHY (2.20 ANGSTROMS) IN COMPLEX WITH NAD AND FRUCTOSE-1-6-BISPHOSPHATE</scope>
    <scope>ACTIVE SITE</scope>
    <scope>SUBUNIT</scope>
</reference>
<feature type="chain" id="PRO_0000168329" description="L-lactate dehydrogenase">
    <location>
        <begin position="1"/>
        <end position="320"/>
    </location>
</feature>
<feature type="active site" description="Proton acceptor" evidence="1 9 10">
    <location>
        <position position="178"/>
    </location>
</feature>
<feature type="binding site" evidence="4 10 11">
    <location>
        <begin position="15"/>
        <end position="16"/>
    </location>
    <ligand>
        <name>NAD(+)</name>
        <dbReference type="ChEBI" id="CHEBI:57540"/>
    </ligand>
</feature>
<feature type="binding site" evidence="1 4 11">
    <location>
        <position position="37"/>
    </location>
    <ligand>
        <name>NAD(+)</name>
        <dbReference type="ChEBI" id="CHEBI:57540"/>
    </ligand>
</feature>
<feature type="binding site" evidence="1">
    <location>
        <position position="42"/>
    </location>
    <ligand>
        <name>NAD(+)</name>
        <dbReference type="ChEBI" id="CHEBI:57540"/>
    </ligand>
</feature>
<feature type="binding site" evidence="1">
    <location>
        <position position="68"/>
    </location>
    <ligand>
        <name>NAD(+)</name>
        <dbReference type="ChEBI" id="CHEBI:57540"/>
    </ligand>
</feature>
<feature type="binding site" evidence="1 4 11">
    <location>
        <begin position="82"/>
        <end position="83"/>
    </location>
    <ligand>
        <name>NAD(+)</name>
        <dbReference type="ChEBI" id="CHEBI:57540"/>
    </ligand>
</feature>
<feature type="binding site" evidence="1">
    <location>
        <position position="85"/>
    </location>
    <ligand>
        <name>substrate</name>
    </ligand>
</feature>
<feature type="binding site" evidence="1">
    <location>
        <position position="91"/>
    </location>
    <ligand>
        <name>substrate</name>
    </ligand>
</feature>
<feature type="binding site" evidence="1 9 10">
    <location>
        <begin position="121"/>
        <end position="123"/>
    </location>
    <ligand>
        <name>NAD(+)</name>
        <dbReference type="ChEBI" id="CHEBI:57540"/>
    </ligand>
</feature>
<feature type="binding site" evidence="1">
    <location>
        <begin position="123"/>
        <end position="126"/>
    </location>
    <ligand>
        <name>substrate</name>
    </ligand>
</feature>
<feature type="binding site" evidence="1">
    <location>
        <position position="146"/>
    </location>
    <ligand>
        <name>NAD(+)</name>
        <dbReference type="ChEBI" id="CHEBI:57540"/>
    </ligand>
</feature>
<feature type="binding site" evidence="1">
    <location>
        <begin position="151"/>
        <end position="154"/>
    </location>
    <ligand>
        <name>substrate</name>
    </ligand>
</feature>
<feature type="binding site" evidence="1 4 10">
    <location>
        <position position="156"/>
    </location>
    <ligand>
        <name>beta-D-fructose 1,6-bisphosphate</name>
        <dbReference type="ChEBI" id="CHEBI:32966"/>
        <note>allosteric activator</note>
    </ligand>
</feature>
<feature type="binding site" evidence="4 10">
    <location>
        <begin position="168"/>
        <end position="172"/>
    </location>
    <ligand>
        <name>beta-D-fructose 1,6-bisphosphate</name>
        <dbReference type="ChEBI" id="CHEBI:32966"/>
        <note>allosteric activator</note>
    </ligand>
</feature>
<feature type="binding site" evidence="1">
    <location>
        <position position="232"/>
    </location>
    <ligand>
        <name>substrate</name>
    </ligand>
</feature>
<feature type="modified residue" description="Phosphotyrosine" evidence="1 3">
    <location>
        <position position="223"/>
    </location>
</feature>
<feature type="sequence conflict" description="In Ref. 4; AA sequence." evidence="7" ref="4">
    <original>V</original>
    <variation>L</variation>
    <location>
        <position position="38"/>
    </location>
</feature>
<feature type="sequence conflict" description="In Ref. 1; BAA08939." evidence="7" ref="1">
    <original>N</original>
    <variation>P</variation>
    <location>
        <position position="51"/>
    </location>
</feature>
<feature type="sequence conflict" description="In Ref. 1; BAA08939." evidence="7" ref="1">
    <original>AP</original>
    <variation>GL</variation>
    <location>
        <begin position="57"/>
        <end position="58"/>
    </location>
</feature>
<feature type="sequence conflict" description="In Ref. 4; AA sequence." evidence="7" ref="4">
    <original>V</original>
    <variation>I</variation>
    <location>
        <position position="120"/>
    </location>
</feature>
<feature type="sequence conflict" description="In Ref. 4; AA sequence." evidence="7" ref="4">
    <original>H</original>
    <variation>T</variation>
    <location>
        <position position="224"/>
    </location>
</feature>
<feature type="sequence conflict" description="In Ref. 4; AA sequence." evidence="7" ref="4">
    <location>
        <begin position="315"/>
        <end position="318"/>
    </location>
</feature>
<feature type="strand" evidence="12">
    <location>
        <begin position="7"/>
        <end position="11"/>
    </location>
</feature>
<feature type="helix" evidence="12">
    <location>
        <begin position="15"/>
        <end position="27"/>
    </location>
</feature>
<feature type="strand" evidence="12">
    <location>
        <begin position="31"/>
        <end position="36"/>
    </location>
</feature>
<feature type="helix" evidence="12">
    <location>
        <begin position="40"/>
        <end position="52"/>
    </location>
</feature>
<feature type="helix" evidence="12">
    <location>
        <begin position="54"/>
        <end position="56"/>
    </location>
</feature>
<feature type="strand" evidence="12">
    <location>
        <begin position="57"/>
        <end position="59"/>
    </location>
</feature>
<feature type="strand" evidence="12">
    <location>
        <begin position="62"/>
        <end position="66"/>
    </location>
</feature>
<feature type="helix" evidence="12">
    <location>
        <begin position="68"/>
        <end position="71"/>
    </location>
</feature>
<feature type="strand" evidence="12">
    <location>
        <begin position="75"/>
        <end position="79"/>
    </location>
</feature>
<feature type="helix" evidence="12">
    <location>
        <begin position="91"/>
        <end position="111"/>
    </location>
</feature>
<feature type="strand" evidence="12">
    <location>
        <begin position="116"/>
        <end position="120"/>
    </location>
</feature>
<feature type="strand" evidence="12">
    <location>
        <begin position="122"/>
        <end position="124"/>
    </location>
</feature>
<feature type="helix" evidence="12">
    <location>
        <begin position="125"/>
        <end position="136"/>
    </location>
</feature>
<feature type="helix" evidence="12">
    <location>
        <begin position="140"/>
        <end position="142"/>
    </location>
</feature>
<feature type="strand" evidence="12">
    <location>
        <begin position="143"/>
        <end position="145"/>
    </location>
</feature>
<feature type="helix" evidence="12">
    <location>
        <begin position="149"/>
        <end position="160"/>
    </location>
</feature>
<feature type="turn" evidence="12">
    <location>
        <begin position="161"/>
        <end position="164"/>
    </location>
</feature>
<feature type="helix" evidence="12">
    <location>
        <begin position="167"/>
        <end position="169"/>
    </location>
</feature>
<feature type="strand" evidence="12">
    <location>
        <begin position="174"/>
        <end position="179"/>
    </location>
</feature>
<feature type="helix" evidence="12">
    <location>
        <begin position="186"/>
        <end position="188"/>
    </location>
</feature>
<feature type="helix" evidence="12">
    <location>
        <begin position="196"/>
        <end position="201"/>
    </location>
</feature>
<feature type="strand" evidence="13">
    <location>
        <begin position="204"/>
        <end position="206"/>
    </location>
</feature>
<feature type="helix" evidence="12">
    <location>
        <begin position="208"/>
        <end position="229"/>
    </location>
</feature>
<feature type="helix" evidence="12">
    <location>
        <begin position="234"/>
        <end position="248"/>
    </location>
</feature>
<feature type="strand" evidence="12">
    <location>
        <begin position="253"/>
        <end position="255"/>
    </location>
</feature>
<feature type="strand" evidence="12">
    <location>
        <begin position="258"/>
        <end position="263"/>
    </location>
</feature>
<feature type="helix" evidence="12">
    <location>
        <begin position="264"/>
        <end position="266"/>
    </location>
</feature>
<feature type="strand" evidence="12">
    <location>
        <begin position="268"/>
        <end position="273"/>
    </location>
</feature>
<feature type="strand" evidence="12">
    <location>
        <begin position="276"/>
        <end position="279"/>
    </location>
</feature>
<feature type="strand" evidence="12">
    <location>
        <begin position="282"/>
        <end position="286"/>
    </location>
</feature>
<feature type="helix" evidence="12">
    <location>
        <begin position="293"/>
        <end position="310"/>
    </location>
</feature>
<feature type="turn" evidence="12">
    <location>
        <begin position="311"/>
        <end position="313"/>
    </location>
</feature>
<keyword id="KW-0002">3D-structure</keyword>
<keyword id="KW-0021">Allosteric enzyme</keyword>
<keyword id="KW-0963">Cytoplasm</keyword>
<keyword id="KW-0903">Direct protein sequencing</keyword>
<keyword id="KW-0520">NAD</keyword>
<keyword id="KW-0560">Oxidoreductase</keyword>
<keyword id="KW-0597">Phosphoprotein</keyword>
<keyword id="KW-1185">Reference proteome</keyword>
<comment type="function">
    <text evidence="1">Catalyzes the conversion of lactate to pyruvate.</text>
</comment>
<comment type="catalytic activity">
    <reaction evidence="1">
        <text>(S)-lactate + NAD(+) = pyruvate + NADH + H(+)</text>
        <dbReference type="Rhea" id="RHEA:23444"/>
        <dbReference type="ChEBI" id="CHEBI:15361"/>
        <dbReference type="ChEBI" id="CHEBI:15378"/>
        <dbReference type="ChEBI" id="CHEBI:16651"/>
        <dbReference type="ChEBI" id="CHEBI:57540"/>
        <dbReference type="ChEBI" id="CHEBI:57945"/>
        <dbReference type="EC" id="1.1.1.27"/>
    </reaction>
</comment>
<comment type="activity regulation">
    <text evidence="1">Allosterically activated by fructose 1,6-bisphosphate (FBP).</text>
</comment>
<comment type="pathway">
    <text evidence="1 8">Fermentation; pyruvate fermentation to lactate; (S)-lactate from pyruvate: step 1/1.</text>
</comment>
<comment type="subunit">
    <text evidence="1 9">Homotetramer.</text>
</comment>
<comment type="subcellular location">
    <subcellularLocation>
        <location evidence="1">Cytoplasm</location>
    </subcellularLocation>
</comment>
<comment type="induction">
    <text evidence="2">Strongly induced under anaerobic conditions. Activated by ResDE, Fnr and ArfM.</text>
</comment>
<comment type="similarity">
    <text evidence="1 7">Belongs to the LDH/MDH superfamily. LDH family.</text>
</comment>
<comment type="sequence caution" evidence="7">
    <conflict type="erroneous initiation">
        <sequence resource="EMBL-CDS" id="BAA08939"/>
    </conflict>
    <text>Extended N-terminus.</text>
</comment>
<comment type="sequence caution" evidence="7">
    <conflict type="erroneous initiation">
        <sequence resource="EMBL-CDS" id="CAB12099"/>
    </conflict>
    <text>Extended N-terminus.</text>
</comment>
<proteinExistence type="evidence at protein level"/>
<organism>
    <name type="scientific">Bacillus subtilis (strain 168)</name>
    <dbReference type="NCBI Taxonomy" id="224308"/>
    <lineage>
        <taxon>Bacteria</taxon>
        <taxon>Bacillati</taxon>
        <taxon>Bacillota</taxon>
        <taxon>Bacilli</taxon>
        <taxon>Bacillales</taxon>
        <taxon>Bacillaceae</taxon>
        <taxon>Bacillus</taxon>
    </lineage>
</organism>
<sequence>MNKHVNKVALIGAGFVGSSYAFALINQGITDELVVIDVNKEKAMGDVMDLNHGKAFAPQPVKTSYGTYEDCKDADIVCICAGANQKPGETRLELVEKNLKIFKGIVSEVMASGFDGIFLVATNPVDILTYATWKFSGLPKERVIGSGTTLDSARFRFMLSEYFGAAPQNVHAHIIGEHGDTELPVWSHANVGGVPVSELVEKNDAYKQEELDQIVDDVKNAAYHIIEKKGATYYGVAMSLARITKAILHNENSILTVSTYLDGQYGADDVYIGVPAVVNRGGIAGITELNLNEKEKEQFLHSAGVLKNILKPHFAEQKVN</sequence>
<protein>
    <recommendedName>
        <fullName evidence="1 5">L-lactate dehydrogenase</fullName>
        <shortName evidence="1 5">L-LDH</shortName>
        <ecNumber evidence="1">1.1.1.27</ecNumber>
    </recommendedName>
</protein>
<name>LDH_BACSU</name>
<evidence type="ECO:0000255" key="1">
    <source>
        <dbReference type="HAMAP-Rule" id="MF_00488"/>
    </source>
</evidence>
<evidence type="ECO:0000269" key="2">
    <source>
    </source>
</evidence>
<evidence type="ECO:0000269" key="3">
    <source>
    </source>
</evidence>
<evidence type="ECO:0000269" key="4">
    <source ref="7"/>
</evidence>
<evidence type="ECO:0000303" key="5">
    <source>
    </source>
</evidence>
<evidence type="ECO:0000303" key="6">
    <source>
    </source>
</evidence>
<evidence type="ECO:0000305" key="7"/>
<evidence type="ECO:0000305" key="8">
    <source>
    </source>
</evidence>
<evidence type="ECO:0000305" key="9">
    <source ref="7"/>
</evidence>
<evidence type="ECO:0007744" key="10">
    <source>
        <dbReference type="PDB" id="3PQD"/>
    </source>
</evidence>
<evidence type="ECO:0007744" key="11">
    <source>
        <dbReference type="PDB" id="3PQF"/>
    </source>
</evidence>
<evidence type="ECO:0007829" key="12">
    <source>
        <dbReference type="PDB" id="3PQE"/>
    </source>
</evidence>
<evidence type="ECO:0007829" key="13">
    <source>
        <dbReference type="PDB" id="3PQF"/>
    </source>
</evidence>